<dbReference type="EMBL" id="CP000802">
    <property type="protein sequence ID" value="ABV07755.1"/>
    <property type="molecule type" value="Genomic_DNA"/>
</dbReference>
<dbReference type="RefSeq" id="WP_000820720.1">
    <property type="nucleotide sequence ID" value="NC_009800.1"/>
</dbReference>
<dbReference type="SMR" id="A8A5F1"/>
<dbReference type="GeneID" id="75206287"/>
<dbReference type="KEGG" id="ecx:EcHS_A3540"/>
<dbReference type="HOGENOM" id="CLU_155943_1_0_6"/>
<dbReference type="GO" id="GO:0005737">
    <property type="term" value="C:cytoplasm"/>
    <property type="evidence" value="ECO:0007669"/>
    <property type="project" value="UniProtKB-SubCell"/>
</dbReference>
<dbReference type="GO" id="GO:0008033">
    <property type="term" value="P:tRNA processing"/>
    <property type="evidence" value="ECO:0007669"/>
    <property type="project" value="UniProtKB-UniRule"/>
</dbReference>
<dbReference type="FunFam" id="3.40.1260.10:FF:000004">
    <property type="entry name" value="Sulfurtransferase TusC"/>
    <property type="match status" value="1"/>
</dbReference>
<dbReference type="Gene3D" id="3.40.1260.10">
    <property type="entry name" value="DsrEFH-like"/>
    <property type="match status" value="1"/>
</dbReference>
<dbReference type="HAMAP" id="MF_00389">
    <property type="entry name" value="Thiourid_synth_C"/>
    <property type="match status" value="1"/>
</dbReference>
<dbReference type="InterPro" id="IPR027396">
    <property type="entry name" value="DsrEFH-like"/>
</dbReference>
<dbReference type="InterPro" id="IPR003787">
    <property type="entry name" value="Sulphur_relay_DsrE/F-like"/>
</dbReference>
<dbReference type="InterPro" id="IPR037450">
    <property type="entry name" value="Sulphur_relay_TusC"/>
</dbReference>
<dbReference type="InterPro" id="IPR017462">
    <property type="entry name" value="Sulphur_relay_TusC/DsrF"/>
</dbReference>
<dbReference type="NCBIfam" id="NF001238">
    <property type="entry name" value="PRK00211.1"/>
    <property type="match status" value="1"/>
</dbReference>
<dbReference type="NCBIfam" id="TIGR03010">
    <property type="entry name" value="sulf_tusC_dsrF"/>
    <property type="match status" value="1"/>
</dbReference>
<dbReference type="PANTHER" id="PTHR38780">
    <property type="entry name" value="PROTEIN TUSC"/>
    <property type="match status" value="1"/>
</dbReference>
<dbReference type="PANTHER" id="PTHR38780:SF1">
    <property type="entry name" value="PROTEIN TUSC"/>
    <property type="match status" value="1"/>
</dbReference>
<dbReference type="Pfam" id="PF02635">
    <property type="entry name" value="DsrE"/>
    <property type="match status" value="1"/>
</dbReference>
<dbReference type="SUPFAM" id="SSF75169">
    <property type="entry name" value="DsrEFH-like"/>
    <property type="match status" value="1"/>
</dbReference>
<evidence type="ECO:0000255" key="1">
    <source>
        <dbReference type="HAMAP-Rule" id="MF_00389"/>
    </source>
</evidence>
<gene>
    <name evidence="1" type="primary">tusC</name>
    <name type="ordered locus">EcHS_A3540</name>
</gene>
<comment type="function">
    <text evidence="1">Part of a sulfur-relay system required for 2-thiolation of 5-methylaminomethyl-2-thiouridine (mnm(5)s(2)U) at tRNA wobble positions.</text>
</comment>
<comment type="subunit">
    <text evidence="1">Heterohexamer, formed by a dimer of trimers. The hexameric TusBCD complex contains 2 copies each of TusB, TusC and TusD. The TusBCD complex interacts with TusE.</text>
</comment>
<comment type="subcellular location">
    <subcellularLocation>
        <location evidence="1">Cytoplasm</location>
    </subcellularLocation>
</comment>
<comment type="similarity">
    <text evidence="1">Belongs to the DsrF/TusC family.</text>
</comment>
<feature type="chain" id="PRO_1000060742" description="Protein TusC">
    <location>
        <begin position="1"/>
        <end position="119"/>
    </location>
</feature>
<protein>
    <recommendedName>
        <fullName evidence="1">Protein TusC</fullName>
    </recommendedName>
    <alternativeName>
        <fullName evidence="1">tRNA 2-thiouridine synthesizing protein C</fullName>
    </alternativeName>
</protein>
<organism>
    <name type="scientific">Escherichia coli O9:H4 (strain HS)</name>
    <dbReference type="NCBI Taxonomy" id="331112"/>
    <lineage>
        <taxon>Bacteria</taxon>
        <taxon>Pseudomonadati</taxon>
        <taxon>Pseudomonadota</taxon>
        <taxon>Gammaproteobacteria</taxon>
        <taxon>Enterobacterales</taxon>
        <taxon>Enterobacteriaceae</taxon>
        <taxon>Escherichia</taxon>
    </lineage>
</organism>
<sequence length="119" mass="13035">MKRIAFVFSTAPHGTAAGREGLDALLATSALTDDLAVFFIADGVFQLLSGQKPDAVLARDYIATFKLLGLYDIEQCWVCAASLRERGLDPQTPFVVEATPLEADALRRELANYDVILRF</sequence>
<reference key="1">
    <citation type="journal article" date="2008" name="J. Bacteriol.">
        <title>The pangenome structure of Escherichia coli: comparative genomic analysis of E. coli commensal and pathogenic isolates.</title>
        <authorList>
            <person name="Rasko D.A."/>
            <person name="Rosovitz M.J."/>
            <person name="Myers G.S.A."/>
            <person name="Mongodin E.F."/>
            <person name="Fricke W.F."/>
            <person name="Gajer P."/>
            <person name="Crabtree J."/>
            <person name="Sebaihia M."/>
            <person name="Thomson N.R."/>
            <person name="Chaudhuri R."/>
            <person name="Henderson I.R."/>
            <person name="Sperandio V."/>
            <person name="Ravel J."/>
        </authorList>
    </citation>
    <scope>NUCLEOTIDE SEQUENCE [LARGE SCALE GENOMIC DNA]</scope>
    <source>
        <strain>HS</strain>
    </source>
</reference>
<keyword id="KW-0963">Cytoplasm</keyword>
<keyword id="KW-0819">tRNA processing</keyword>
<proteinExistence type="inferred from homology"/>
<name>TUSC_ECOHS</name>
<accession>A8A5F1</accession>